<accession>A5UA84</accession>
<protein>
    <recommendedName>
        <fullName evidence="1">tRNA(Ile)-lysidine synthase</fullName>
        <ecNumber evidence="1">6.3.4.19</ecNumber>
    </recommendedName>
    <alternativeName>
        <fullName evidence="1">tRNA(Ile)-2-lysyl-cytidine synthase</fullName>
    </alternativeName>
    <alternativeName>
        <fullName evidence="1">tRNA(Ile)-lysidine synthetase</fullName>
    </alternativeName>
</protein>
<sequence length="430" mass="50091">MDLLSDIEKQLQKATAQGFLIALSGGLDSTVLLSLFAKLRQKQPHLPPLSVRAIHIHHGLSPNADSWAKHCQDLCDQFQIPLIIERVQVDKTNGIEAGAREARYQAIKKHLQTQEILVTAHHLNDQTETFFLALKRGSGLQGLGAMQQQSVLFGMPILRPLLGFTRTQLENYAQKEKLNWITDESNGDNRFDRNFLRNEILPKLRERWAYFDLAVQRSAQHCFEQQQLINDLLSEAFAEHCQIKNQFKLCQFRKYSLAKQTALLRMWLAENQLEMPSKRQLTQLINDVVFAKEEANPQFQLVNKVIRRYQDRLYLTKPFSDLTKYCLKLEQNTLSLPDDLGNLSVQENEHNLIFHWQDFSVTLEKTNLPISIRFGYSGKVKHHLKRPREDIKKIWQELSVPPWERNRIPLIFYGNKLKSAVGFFRVFDEY</sequence>
<organism>
    <name type="scientific">Haemophilus influenzae (strain PittEE)</name>
    <dbReference type="NCBI Taxonomy" id="374930"/>
    <lineage>
        <taxon>Bacteria</taxon>
        <taxon>Pseudomonadati</taxon>
        <taxon>Pseudomonadota</taxon>
        <taxon>Gammaproteobacteria</taxon>
        <taxon>Pasteurellales</taxon>
        <taxon>Pasteurellaceae</taxon>
        <taxon>Haemophilus</taxon>
    </lineage>
</organism>
<gene>
    <name evidence="1" type="primary">tilS</name>
    <name type="ordered locus">CGSHiEE_00975</name>
</gene>
<dbReference type="EC" id="6.3.4.19" evidence="1"/>
<dbReference type="EMBL" id="CP000671">
    <property type="protein sequence ID" value="ABQ97685.1"/>
    <property type="molecule type" value="Genomic_DNA"/>
</dbReference>
<dbReference type="SMR" id="A5UA84"/>
<dbReference type="KEGG" id="hip:CGSHiEE_00975"/>
<dbReference type="HOGENOM" id="CLU_018869_2_0_6"/>
<dbReference type="GO" id="GO:0005737">
    <property type="term" value="C:cytoplasm"/>
    <property type="evidence" value="ECO:0007669"/>
    <property type="project" value="UniProtKB-SubCell"/>
</dbReference>
<dbReference type="GO" id="GO:0005524">
    <property type="term" value="F:ATP binding"/>
    <property type="evidence" value="ECO:0007669"/>
    <property type="project" value="UniProtKB-UniRule"/>
</dbReference>
<dbReference type="GO" id="GO:0032267">
    <property type="term" value="F:tRNA(Ile)-lysidine synthase activity"/>
    <property type="evidence" value="ECO:0007669"/>
    <property type="project" value="UniProtKB-EC"/>
</dbReference>
<dbReference type="GO" id="GO:0006400">
    <property type="term" value="P:tRNA modification"/>
    <property type="evidence" value="ECO:0007669"/>
    <property type="project" value="UniProtKB-UniRule"/>
</dbReference>
<dbReference type="CDD" id="cd01992">
    <property type="entry name" value="TilS_N"/>
    <property type="match status" value="1"/>
</dbReference>
<dbReference type="Gene3D" id="1.20.59.20">
    <property type="match status" value="1"/>
</dbReference>
<dbReference type="Gene3D" id="3.40.50.620">
    <property type="entry name" value="HUPs"/>
    <property type="match status" value="1"/>
</dbReference>
<dbReference type="HAMAP" id="MF_01161">
    <property type="entry name" value="tRNA_Ile_lys_synt"/>
    <property type="match status" value="1"/>
</dbReference>
<dbReference type="InterPro" id="IPR012796">
    <property type="entry name" value="Lysidine-tRNA-synth_C"/>
</dbReference>
<dbReference type="InterPro" id="IPR014729">
    <property type="entry name" value="Rossmann-like_a/b/a_fold"/>
</dbReference>
<dbReference type="InterPro" id="IPR011063">
    <property type="entry name" value="TilS/TtcA_N"/>
</dbReference>
<dbReference type="InterPro" id="IPR012094">
    <property type="entry name" value="tRNA_Ile_lys_synt"/>
</dbReference>
<dbReference type="InterPro" id="IPR012795">
    <property type="entry name" value="tRNA_Ile_lys_synt_N"/>
</dbReference>
<dbReference type="InterPro" id="IPR015262">
    <property type="entry name" value="tRNA_Ile_lys_synt_subst-bd"/>
</dbReference>
<dbReference type="NCBIfam" id="TIGR02433">
    <property type="entry name" value="lysidine_TilS_C"/>
    <property type="match status" value="1"/>
</dbReference>
<dbReference type="NCBIfam" id="TIGR02432">
    <property type="entry name" value="lysidine_TilS_N"/>
    <property type="match status" value="1"/>
</dbReference>
<dbReference type="PANTHER" id="PTHR43033">
    <property type="entry name" value="TRNA(ILE)-LYSIDINE SYNTHASE-RELATED"/>
    <property type="match status" value="1"/>
</dbReference>
<dbReference type="PANTHER" id="PTHR43033:SF1">
    <property type="entry name" value="TRNA(ILE)-LYSIDINE SYNTHASE-RELATED"/>
    <property type="match status" value="1"/>
</dbReference>
<dbReference type="Pfam" id="PF01171">
    <property type="entry name" value="ATP_bind_3"/>
    <property type="match status" value="1"/>
</dbReference>
<dbReference type="Pfam" id="PF09179">
    <property type="entry name" value="TilS"/>
    <property type="match status" value="1"/>
</dbReference>
<dbReference type="Pfam" id="PF11734">
    <property type="entry name" value="TilS_C"/>
    <property type="match status" value="1"/>
</dbReference>
<dbReference type="SMART" id="SM00977">
    <property type="entry name" value="TilS_C"/>
    <property type="match status" value="1"/>
</dbReference>
<dbReference type="SUPFAM" id="SSF52402">
    <property type="entry name" value="Adenine nucleotide alpha hydrolases-like"/>
    <property type="match status" value="1"/>
</dbReference>
<dbReference type="SUPFAM" id="SSF82829">
    <property type="entry name" value="MesJ substrate recognition domain-like"/>
    <property type="match status" value="1"/>
</dbReference>
<dbReference type="SUPFAM" id="SSF56037">
    <property type="entry name" value="PheT/TilS domain"/>
    <property type="match status" value="1"/>
</dbReference>
<evidence type="ECO:0000255" key="1">
    <source>
        <dbReference type="HAMAP-Rule" id="MF_01161"/>
    </source>
</evidence>
<feature type="chain" id="PRO_1000137869" description="tRNA(Ile)-lysidine synthase">
    <location>
        <begin position="1"/>
        <end position="430"/>
    </location>
</feature>
<feature type="binding site" evidence="1">
    <location>
        <begin position="24"/>
        <end position="29"/>
    </location>
    <ligand>
        <name>ATP</name>
        <dbReference type="ChEBI" id="CHEBI:30616"/>
    </ligand>
</feature>
<proteinExistence type="inferred from homology"/>
<name>TILS_HAEIE</name>
<reference key="1">
    <citation type="journal article" date="2007" name="Genome Biol.">
        <title>Characterization and modeling of the Haemophilus influenzae core and supragenomes based on the complete genomic sequences of Rd and 12 clinical nontypeable strains.</title>
        <authorList>
            <person name="Hogg J.S."/>
            <person name="Hu F.Z."/>
            <person name="Janto B."/>
            <person name="Boissy R."/>
            <person name="Hayes J."/>
            <person name="Keefe R."/>
            <person name="Post J.C."/>
            <person name="Ehrlich G.D."/>
        </authorList>
    </citation>
    <scope>NUCLEOTIDE SEQUENCE [LARGE SCALE GENOMIC DNA]</scope>
    <source>
        <strain>PittEE</strain>
    </source>
</reference>
<keyword id="KW-0067">ATP-binding</keyword>
<keyword id="KW-0963">Cytoplasm</keyword>
<keyword id="KW-0436">Ligase</keyword>
<keyword id="KW-0547">Nucleotide-binding</keyword>
<keyword id="KW-0819">tRNA processing</keyword>
<comment type="function">
    <text evidence="1">Ligates lysine onto the cytidine present at position 34 of the AUA codon-specific tRNA(Ile) that contains the anticodon CAU, in an ATP-dependent manner. Cytidine is converted to lysidine, thus changing the amino acid specificity of the tRNA from methionine to isoleucine.</text>
</comment>
<comment type="catalytic activity">
    <reaction evidence="1">
        <text>cytidine(34) in tRNA(Ile2) + L-lysine + ATP = lysidine(34) in tRNA(Ile2) + AMP + diphosphate + H(+)</text>
        <dbReference type="Rhea" id="RHEA:43744"/>
        <dbReference type="Rhea" id="RHEA-COMP:10625"/>
        <dbReference type="Rhea" id="RHEA-COMP:10670"/>
        <dbReference type="ChEBI" id="CHEBI:15378"/>
        <dbReference type="ChEBI" id="CHEBI:30616"/>
        <dbReference type="ChEBI" id="CHEBI:32551"/>
        <dbReference type="ChEBI" id="CHEBI:33019"/>
        <dbReference type="ChEBI" id="CHEBI:82748"/>
        <dbReference type="ChEBI" id="CHEBI:83665"/>
        <dbReference type="ChEBI" id="CHEBI:456215"/>
        <dbReference type="EC" id="6.3.4.19"/>
    </reaction>
</comment>
<comment type="subcellular location">
    <subcellularLocation>
        <location evidence="1">Cytoplasm</location>
    </subcellularLocation>
</comment>
<comment type="domain">
    <text>The N-terminal region contains the highly conserved SGGXDS motif, predicted to be a P-loop motif involved in ATP binding.</text>
</comment>
<comment type="similarity">
    <text evidence="1">Belongs to the tRNA(Ile)-lysidine synthase family.</text>
</comment>